<accession>Q6UFZ2</accession>
<feature type="chain" id="PRO_0000058616" description="14-3-3 protein gamma-2">
    <location>
        <begin position="1"/>
        <end position="248"/>
    </location>
</feature>
<feature type="site" description="Interaction with phosphoserine on interacting protein" evidence="1">
    <location>
        <position position="57"/>
    </location>
</feature>
<feature type="site" description="Interaction with phosphoserine on interacting protein" evidence="1">
    <location>
        <position position="132"/>
    </location>
</feature>
<name>143G2_ONCMY</name>
<organism>
    <name type="scientific">Oncorhynchus mykiss</name>
    <name type="common">Rainbow trout</name>
    <name type="synonym">Salmo gairdneri</name>
    <dbReference type="NCBI Taxonomy" id="8022"/>
    <lineage>
        <taxon>Eukaryota</taxon>
        <taxon>Metazoa</taxon>
        <taxon>Chordata</taxon>
        <taxon>Craniata</taxon>
        <taxon>Vertebrata</taxon>
        <taxon>Euteleostomi</taxon>
        <taxon>Actinopterygii</taxon>
        <taxon>Neopterygii</taxon>
        <taxon>Teleostei</taxon>
        <taxon>Protacanthopterygii</taxon>
        <taxon>Salmoniformes</taxon>
        <taxon>Salmonidae</taxon>
        <taxon>Salmoninae</taxon>
        <taxon>Oncorhynchus</taxon>
    </lineage>
</organism>
<sequence>MVDREQLVQKARLAEQAERYDDMAAAMKSVTELNEALSNEERNLLSVAYKNVVGARRSSWRVISSIEQKTSADGNEKKIEMVRAYREKIEKELEAVCQDVLNLLDNYLIKNCNETQHESKVFYLKMKGDYYRYLAEVATGEKRATVIESSEKAYNEAHEISKEHMQPTHPIRLGLALNYSVFYYEIQNAPEQACHLAKTAFDDAIAELDTLNEDSYQDSTLIMQLLRDNLTLWTSDQQDDEGGEGNKD</sequence>
<evidence type="ECO:0000250" key="1"/>
<evidence type="ECO:0000269" key="2">
    <source>
    </source>
</evidence>
<evidence type="ECO:0000305" key="3"/>
<protein>
    <recommendedName>
        <fullName>14-3-3 protein gamma-2</fullName>
        <shortName>Protein 14-3-3G2</shortName>
    </recommendedName>
</protein>
<dbReference type="EMBL" id="AY370886">
    <property type="protein sequence ID" value="AAQ72494.1"/>
    <property type="molecule type" value="mRNA"/>
</dbReference>
<dbReference type="RefSeq" id="NP_001117947.1">
    <property type="nucleotide sequence ID" value="NM_001124475.1"/>
</dbReference>
<dbReference type="SMR" id="Q6UFZ2"/>
<dbReference type="GeneID" id="100136199"/>
<dbReference type="KEGG" id="omy:100136199"/>
<dbReference type="CTD" id="560560"/>
<dbReference type="OrthoDB" id="10260625at2759"/>
<dbReference type="Proteomes" id="UP000694395">
    <property type="component" value="Unplaced"/>
</dbReference>
<dbReference type="GO" id="GO:0005737">
    <property type="term" value="C:cytoplasm"/>
    <property type="evidence" value="ECO:0007669"/>
    <property type="project" value="UniProtKB-SubCell"/>
</dbReference>
<dbReference type="FunFam" id="1.20.190.20:FF:000001">
    <property type="entry name" value="14-3-3 gamma 1"/>
    <property type="match status" value="1"/>
</dbReference>
<dbReference type="Gene3D" id="1.20.190.20">
    <property type="entry name" value="14-3-3 domain"/>
    <property type="match status" value="1"/>
</dbReference>
<dbReference type="InterPro" id="IPR000308">
    <property type="entry name" value="14-3-3"/>
</dbReference>
<dbReference type="InterPro" id="IPR023409">
    <property type="entry name" value="14-3-3_CS"/>
</dbReference>
<dbReference type="InterPro" id="IPR036815">
    <property type="entry name" value="14-3-3_dom_sf"/>
</dbReference>
<dbReference type="InterPro" id="IPR023410">
    <property type="entry name" value="14-3-3_domain"/>
</dbReference>
<dbReference type="PANTHER" id="PTHR18860">
    <property type="entry name" value="14-3-3 PROTEIN"/>
    <property type="match status" value="1"/>
</dbReference>
<dbReference type="Pfam" id="PF00244">
    <property type="entry name" value="14-3-3"/>
    <property type="match status" value="1"/>
</dbReference>
<dbReference type="PIRSF" id="PIRSF000868">
    <property type="entry name" value="14-3-3"/>
    <property type="match status" value="1"/>
</dbReference>
<dbReference type="PRINTS" id="PR00305">
    <property type="entry name" value="1433ZETA"/>
</dbReference>
<dbReference type="SMART" id="SM00101">
    <property type="entry name" value="14_3_3"/>
    <property type="match status" value="1"/>
</dbReference>
<dbReference type="SUPFAM" id="SSF48445">
    <property type="entry name" value="14-3-3 protein"/>
    <property type="match status" value="1"/>
</dbReference>
<dbReference type="PROSITE" id="PS00796">
    <property type="entry name" value="1433_1"/>
    <property type="match status" value="1"/>
</dbReference>
<keyword id="KW-0963">Cytoplasm</keyword>
<proteinExistence type="evidence at transcript level"/>
<reference key="1">
    <citation type="journal article" date="2004" name="J. Exp. Biol.">
        <title>The 14-3-3 proteins in the teleost fish rainbow trout (Oncorhynchus mykiss).</title>
        <authorList>
            <person name="Koskinen H."/>
            <person name="Krasnov A."/>
            <person name="Rexroad C."/>
            <person name="Gorodilov Y."/>
            <person name="Afanasyev S."/>
            <person name="Moelsae H."/>
        </authorList>
    </citation>
    <scope>NUCLEOTIDE SEQUENCE [MRNA]</scope>
    <scope>TISSUE SPECIFICITY</scope>
    <scope>DEVELOPMENTAL STAGE</scope>
    <scope>INDUCTION</scope>
</reference>
<comment type="function">
    <text evidence="1">Adapter protein implicated in the regulation of a large spectrum of both general and specialized signaling pathways. Binds to a large number of partners, usually by recognition of a phosphoserine or phosphothreonine motif. Binding generally results in the modulation of the activity of the binding partner (By similarity).</text>
</comment>
<comment type="subunit">
    <text evidence="1">Homodimer, and heterodimer with other family members.</text>
</comment>
<comment type="subcellular location">
    <subcellularLocation>
        <location evidence="1">Cytoplasm</location>
    </subcellularLocation>
</comment>
<comment type="tissue specificity">
    <text evidence="2">Expressed in brain, gill, heart, intestine, kidney, liver, ovary, skeletal muscle, spleen and testis.</text>
</comment>
<comment type="developmental stage">
    <text evidence="2">Expressed from the 34 somite stage.</text>
</comment>
<comment type="induction">
    <text evidence="2">Repressed under stress conditions such as netting.</text>
</comment>
<comment type="similarity">
    <text evidence="3">Belongs to the 14-3-3 family.</text>
</comment>